<comment type="function">
    <text evidence="5">Functions as a component of the nuclear pore complex (NPC). NPC components, collectively referred to as nucleoporins (NUPs), can play the role of both NPC structural components and of docking or interaction partners for transiently associated nuclear transport factors. May play a role in the association of MAD1 with the NPC.</text>
</comment>
<comment type="subunit">
    <text evidence="5 6">Interacts with TMEM48/NDC1. Forms a complex with NUP93, NUP155, NUP205 and lamin B; the interaction with NUP93 is direct.</text>
</comment>
<comment type="interaction">
    <interactant intactId="EBI-9050429">
        <id>Q8NFH5</id>
    </interactant>
    <interactant intactId="EBI-4397613">
        <id>Q7L273</id>
        <label>KCTD9</label>
    </interactant>
    <organismsDiffer>false</organismsDiffer>
    <experiments>8</experiments>
</comment>
<comment type="interaction">
    <interactant intactId="EBI-9050429">
        <id>Q8NFH5</id>
    </interactant>
    <interactant intactId="EBI-714158">
        <id>Q13526</id>
        <label>PIN1</label>
    </interactant>
    <organismsDiffer>false</organismsDiffer>
    <experiments>5</experiments>
</comment>
<comment type="subcellular location">
    <subcellularLocation>
        <location evidence="4">Nucleus</location>
        <location evidence="4">Nuclear pore complex</location>
    </subcellularLocation>
    <subcellularLocation>
        <location evidence="5">Nucleus membrane</location>
        <topology evidence="5">Peripheral membrane protein</topology>
    </subcellularLocation>
    <text evidence="5">Tightly associated with the nuclear membrane and lamina.</text>
</comment>
<comment type="alternative products">
    <event type="alternative splicing"/>
    <isoform>
        <id>Q8NFH5-1</id>
        <name>1</name>
        <sequence type="displayed"/>
    </isoform>
    <isoform>
        <id>Q8NFH5-2</id>
        <name>2</name>
        <sequence type="described" ref="VSP_056211"/>
    </isoform>
    <isoform>
        <id>Q8NFH5-3</id>
        <name>3</name>
        <sequence type="described" ref="VSP_056210"/>
    </isoform>
</comment>
<comment type="similarity">
    <text evidence="9">Belongs to the Nup35 family.</text>
</comment>
<name>NUP35_HUMAN</name>
<sequence length="326" mass="34774">MAAFAVEPQGPALGSEPMMLGSPTSPKPGVNAQFLPGFLMGDLPAPVTPQPRSISGPSVGVMEMRSPLLAGGSPPQPVVPAHKDKSGAPPVRSIYDDISSPGLGSTPLTSRRQPNISVMQSPLVGVTSTPGTGQSMFSPASIGQPRKTTLSPAQLDPFYTQGDSLTSEDHLDDSWVTVFGFPQASASYILLQFAQYGNILKHVMSNTGNWMHIRYQSKLQARKALSKDGRIFGESIMIGVKPCIDKSVMESSDRCALSSPSLAFTPPIKTLGTPTQPGSTPRISTMRPLATAYKASTSDYQVISDRQTPKKDESLVSKAMEYMFGW</sequence>
<keyword id="KW-0002">3D-structure</keyword>
<keyword id="KW-0025">Alternative splicing</keyword>
<keyword id="KW-0472">Membrane</keyword>
<keyword id="KW-0509">mRNA transport</keyword>
<keyword id="KW-0906">Nuclear pore complex</keyword>
<keyword id="KW-0539">Nucleus</keyword>
<keyword id="KW-0597">Phosphoprotein</keyword>
<keyword id="KW-0653">Protein transport</keyword>
<keyword id="KW-1267">Proteomics identification</keyword>
<keyword id="KW-1185">Reference proteome</keyword>
<keyword id="KW-0811">Translocation</keyword>
<keyword id="KW-0813">Transport</keyword>
<accession>Q8NFH5</accession>
<accession>B4DP57</accession>
<accession>B4DYB4</accession>
<accession>Q4ZFZ9</accession>
<accession>Q53S95</accession>
<accession>Q8TDJ1</accession>
<proteinExistence type="evidence at protein level"/>
<gene>
    <name type="primary">NUP35</name>
    <name type="synonym">MP44</name>
    <name type="synonym">NUP53</name>
</gene>
<evidence type="ECO:0000250" key="1">
    <source>
        <dbReference type="UniProtKB" id="Q8R4R6"/>
    </source>
</evidence>
<evidence type="ECO:0000255" key="2">
    <source>
        <dbReference type="PROSITE-ProRule" id="PRU00804"/>
    </source>
</evidence>
<evidence type="ECO:0000256" key="3">
    <source>
        <dbReference type="SAM" id="MobiDB-lite"/>
    </source>
</evidence>
<evidence type="ECO:0000269" key="4">
    <source>
    </source>
</evidence>
<evidence type="ECO:0000269" key="5">
    <source>
    </source>
</evidence>
<evidence type="ECO:0000269" key="6">
    <source>
    </source>
</evidence>
<evidence type="ECO:0000303" key="7">
    <source>
    </source>
</evidence>
<evidence type="ECO:0000303" key="8">
    <source>
    </source>
</evidence>
<evidence type="ECO:0000305" key="9"/>
<evidence type="ECO:0000312" key="10">
    <source>
        <dbReference type="HGNC" id="HGNC:29797"/>
    </source>
</evidence>
<evidence type="ECO:0007744" key="11">
    <source>
    </source>
</evidence>
<evidence type="ECO:0007744" key="12">
    <source>
    </source>
</evidence>
<evidence type="ECO:0007744" key="13">
    <source>
    </source>
</evidence>
<evidence type="ECO:0007744" key="14">
    <source>
    </source>
</evidence>
<evidence type="ECO:0007744" key="15">
    <source>
    </source>
</evidence>
<evidence type="ECO:0007744" key="16">
    <source>
    </source>
</evidence>
<evidence type="ECO:0007744" key="17">
    <source>
    </source>
</evidence>
<evidence type="ECO:0007829" key="18">
    <source>
        <dbReference type="PDB" id="4LIR"/>
    </source>
</evidence>
<evidence type="ECO:0007829" key="19">
    <source>
        <dbReference type="PDB" id="8OZB"/>
    </source>
</evidence>
<organism>
    <name type="scientific">Homo sapiens</name>
    <name type="common">Human</name>
    <dbReference type="NCBI Taxonomy" id="9606"/>
    <lineage>
        <taxon>Eukaryota</taxon>
        <taxon>Metazoa</taxon>
        <taxon>Chordata</taxon>
        <taxon>Craniata</taxon>
        <taxon>Vertebrata</taxon>
        <taxon>Euteleostomi</taxon>
        <taxon>Mammalia</taxon>
        <taxon>Eutheria</taxon>
        <taxon>Euarchontoglires</taxon>
        <taxon>Primates</taxon>
        <taxon>Haplorrhini</taxon>
        <taxon>Catarrhini</taxon>
        <taxon>Hominidae</taxon>
        <taxon>Homo</taxon>
    </lineage>
</organism>
<dbReference type="EMBL" id="AF514993">
    <property type="protein sequence ID" value="AAM76704.1"/>
    <property type="molecule type" value="mRNA"/>
</dbReference>
<dbReference type="EMBL" id="AF411516">
    <property type="protein sequence ID" value="AAL86379.1"/>
    <property type="molecule type" value="mRNA"/>
</dbReference>
<dbReference type="EMBL" id="AK298199">
    <property type="protein sequence ID" value="BAG60469.1"/>
    <property type="molecule type" value="mRNA"/>
</dbReference>
<dbReference type="EMBL" id="AK302350">
    <property type="protein sequence ID" value="BAG63676.1"/>
    <property type="molecule type" value="mRNA"/>
</dbReference>
<dbReference type="EMBL" id="AC064871">
    <property type="protein sequence ID" value="AAY24198.1"/>
    <property type="molecule type" value="Genomic_DNA"/>
</dbReference>
<dbReference type="EMBL" id="AC079249">
    <property type="protein sequence ID" value="AAX88896.1"/>
    <property type="molecule type" value="Genomic_DNA"/>
</dbReference>
<dbReference type="EMBL" id="BC047029">
    <property type="protein sequence ID" value="AAH47029.1"/>
    <property type="molecule type" value="mRNA"/>
</dbReference>
<dbReference type="EMBL" id="BC061698">
    <property type="protein sequence ID" value="AAH61698.1"/>
    <property type="molecule type" value="mRNA"/>
</dbReference>
<dbReference type="CCDS" id="CCDS2290.1">
    <molecule id="Q8NFH5-1"/>
</dbReference>
<dbReference type="CCDS" id="CCDS74614.1">
    <molecule id="Q8NFH5-2"/>
</dbReference>
<dbReference type="RefSeq" id="NP_001274513.1">
    <molecule id="Q8NFH5-2"/>
    <property type="nucleotide sequence ID" value="NM_001287584.2"/>
</dbReference>
<dbReference type="RefSeq" id="NP_001274514.1">
    <property type="nucleotide sequence ID" value="NM_001287585.1"/>
</dbReference>
<dbReference type="RefSeq" id="NP_612142.2">
    <molecule id="Q8NFH5-1"/>
    <property type="nucleotide sequence ID" value="NM_138285.4"/>
</dbReference>
<dbReference type="RefSeq" id="XP_006712317.1">
    <molecule id="Q8NFH5-2"/>
    <property type="nucleotide sequence ID" value="XM_006712254.4"/>
</dbReference>
<dbReference type="RefSeq" id="XP_011508878.1">
    <molecule id="Q8NFH5-2"/>
    <property type="nucleotide sequence ID" value="XM_011510576.4"/>
</dbReference>
<dbReference type="RefSeq" id="XP_011508879.1">
    <molecule id="Q8NFH5-2"/>
    <property type="nucleotide sequence ID" value="XM_011510577.3"/>
</dbReference>
<dbReference type="RefSeq" id="XP_047299226.1">
    <molecule id="Q8NFH5-2"/>
    <property type="nucleotide sequence ID" value="XM_047443270.1"/>
</dbReference>
<dbReference type="RefSeq" id="XP_054196447.1">
    <molecule id="Q8NFH5-2"/>
    <property type="nucleotide sequence ID" value="XM_054340472.1"/>
</dbReference>
<dbReference type="PDB" id="4LIR">
    <property type="method" value="X-ray"/>
    <property type="resolution" value="2.46 A"/>
    <property type="chains" value="A/B=151-266"/>
</dbReference>
<dbReference type="PDB" id="7MW1">
    <property type="method" value="X-ray"/>
    <property type="resolution" value="3.40 A"/>
    <property type="chains" value="C/D=84-150"/>
</dbReference>
<dbReference type="PDB" id="7R5J">
    <property type="method" value="EM"/>
    <property type="resolution" value="50.00 A"/>
    <property type="chains" value="F0/F1/F2/F3=1-326"/>
</dbReference>
<dbReference type="PDB" id="7R5K">
    <property type="method" value="EM"/>
    <property type="resolution" value="12.00 A"/>
    <property type="chains" value="F0/F1/F2/F3=1-326"/>
</dbReference>
<dbReference type="PDB" id="8OZB">
    <property type="method" value="X-ray"/>
    <property type="resolution" value="2.09 A"/>
    <property type="chains" value="E/F=173-248"/>
</dbReference>
<dbReference type="PDBsum" id="4LIR"/>
<dbReference type="PDBsum" id="7MW1"/>
<dbReference type="PDBsum" id="7R5J"/>
<dbReference type="PDBsum" id="7R5K"/>
<dbReference type="PDBsum" id="8OZB"/>
<dbReference type="EMDB" id="EMD-14321"/>
<dbReference type="EMDB" id="EMD-14322"/>
<dbReference type="SMR" id="Q8NFH5"/>
<dbReference type="BioGRID" id="126190">
    <property type="interactions" value="450"/>
</dbReference>
<dbReference type="ComplexPortal" id="CPX-873">
    <property type="entry name" value="Nuclear pore complex"/>
</dbReference>
<dbReference type="CORUM" id="Q8NFH5"/>
<dbReference type="DIP" id="DIP-47308N"/>
<dbReference type="FunCoup" id="Q8NFH5">
    <property type="interactions" value="2842"/>
</dbReference>
<dbReference type="IntAct" id="Q8NFH5">
    <property type="interactions" value="67"/>
</dbReference>
<dbReference type="MINT" id="Q8NFH5"/>
<dbReference type="STRING" id="9606.ENSP00000295119"/>
<dbReference type="TCDB" id="1.I.1.1.3">
    <property type="family name" value="the nuclear pore complex (npc) family"/>
</dbReference>
<dbReference type="GlyCosmos" id="Q8NFH5">
    <property type="glycosylation" value="2 sites, 1 glycan"/>
</dbReference>
<dbReference type="GlyGen" id="Q8NFH5">
    <property type="glycosylation" value="7 sites, 1 N-linked glycan (1 site), 1 O-linked glycan (5 sites)"/>
</dbReference>
<dbReference type="iPTMnet" id="Q8NFH5"/>
<dbReference type="PhosphoSitePlus" id="Q8NFH5"/>
<dbReference type="SwissPalm" id="Q8NFH5"/>
<dbReference type="BioMuta" id="NUP35"/>
<dbReference type="DMDM" id="74730292"/>
<dbReference type="jPOST" id="Q8NFH5"/>
<dbReference type="MassIVE" id="Q8NFH5"/>
<dbReference type="PaxDb" id="9606-ENSP00000295119"/>
<dbReference type="PeptideAtlas" id="Q8NFH5"/>
<dbReference type="ProteomicsDB" id="4760"/>
<dbReference type="ProteomicsDB" id="5514"/>
<dbReference type="ProteomicsDB" id="73307">
    <molecule id="Q8NFH5-1"/>
</dbReference>
<dbReference type="Pumba" id="Q8NFH5"/>
<dbReference type="Antibodypedia" id="19771">
    <property type="antibodies" value="211 antibodies from 29 providers"/>
</dbReference>
<dbReference type="DNASU" id="129401"/>
<dbReference type="Ensembl" id="ENST00000295119.9">
    <molecule id="Q8NFH5-1"/>
    <property type="protein sequence ID" value="ENSP00000295119.4"/>
    <property type="gene ID" value="ENSG00000163002.13"/>
</dbReference>
<dbReference type="Ensembl" id="ENST00000409798.5">
    <molecule id="Q8NFH5-2"/>
    <property type="protein sequence ID" value="ENSP00000387305.1"/>
    <property type="gene ID" value="ENSG00000163002.13"/>
</dbReference>
<dbReference type="GeneID" id="129401"/>
<dbReference type="KEGG" id="hsa:129401"/>
<dbReference type="MANE-Select" id="ENST00000295119.9">
    <property type="protein sequence ID" value="ENSP00000295119.4"/>
    <property type="RefSeq nucleotide sequence ID" value="NM_138285.5"/>
    <property type="RefSeq protein sequence ID" value="NP_612142.2"/>
</dbReference>
<dbReference type="UCSC" id="uc002upf.5">
    <molecule id="Q8NFH5-1"/>
    <property type="organism name" value="human"/>
</dbReference>
<dbReference type="AGR" id="HGNC:29797"/>
<dbReference type="CTD" id="129401"/>
<dbReference type="GeneCards" id="NUP35"/>
<dbReference type="HGNC" id="HGNC:29797">
    <property type="gene designation" value="NUP35"/>
</dbReference>
<dbReference type="HPA" id="ENSG00000163002">
    <property type="expression patterns" value="Low tissue specificity"/>
</dbReference>
<dbReference type="MIM" id="608140">
    <property type="type" value="gene"/>
</dbReference>
<dbReference type="neXtProt" id="NX_Q8NFH5"/>
<dbReference type="OpenTargets" id="ENSG00000163002"/>
<dbReference type="PharmGKB" id="PA134861481"/>
<dbReference type="VEuPathDB" id="HostDB:ENSG00000163002"/>
<dbReference type="eggNOG" id="KOG4285">
    <property type="taxonomic scope" value="Eukaryota"/>
</dbReference>
<dbReference type="GeneTree" id="ENSGT00390000005923"/>
<dbReference type="HOGENOM" id="CLU_056189_0_0_1"/>
<dbReference type="InParanoid" id="Q8NFH5"/>
<dbReference type="OMA" id="SSYHTND"/>
<dbReference type="OrthoDB" id="3365060at2759"/>
<dbReference type="PAN-GO" id="Q8NFH5">
    <property type="GO annotations" value="8 GO annotations based on evolutionary models"/>
</dbReference>
<dbReference type="PhylomeDB" id="Q8NFH5"/>
<dbReference type="TreeFam" id="TF325369"/>
<dbReference type="PathwayCommons" id="Q8NFH5"/>
<dbReference type="Reactome" id="R-HSA-1169408">
    <property type="pathway name" value="ISG15 antiviral mechanism"/>
</dbReference>
<dbReference type="Reactome" id="R-HSA-159227">
    <property type="pathway name" value="Transport of the SLBP independent Mature mRNA"/>
</dbReference>
<dbReference type="Reactome" id="R-HSA-159230">
    <property type="pathway name" value="Transport of the SLBP Dependant Mature mRNA"/>
</dbReference>
<dbReference type="Reactome" id="R-HSA-159231">
    <property type="pathway name" value="Transport of Mature mRNA Derived from an Intronless Transcript"/>
</dbReference>
<dbReference type="Reactome" id="R-HSA-159236">
    <property type="pathway name" value="Transport of Mature mRNA derived from an Intron-Containing Transcript"/>
</dbReference>
<dbReference type="Reactome" id="R-HSA-165054">
    <property type="pathway name" value="Rev-mediated nuclear export of HIV RNA"/>
</dbReference>
<dbReference type="Reactome" id="R-HSA-168271">
    <property type="pathway name" value="Transport of Ribonucleoproteins into the Host Nucleus"/>
</dbReference>
<dbReference type="Reactome" id="R-HSA-168276">
    <property type="pathway name" value="NS1 Mediated Effects on Host Pathways"/>
</dbReference>
<dbReference type="Reactome" id="R-HSA-168325">
    <property type="pathway name" value="Viral Messenger RNA Synthesis"/>
</dbReference>
<dbReference type="Reactome" id="R-HSA-168333">
    <property type="pathway name" value="NEP/NS2 Interacts with the Cellular Export Machinery"/>
</dbReference>
<dbReference type="Reactome" id="R-HSA-170822">
    <property type="pathway name" value="Regulation of Glucokinase by Glucokinase Regulatory Protein"/>
</dbReference>
<dbReference type="Reactome" id="R-HSA-180746">
    <property type="pathway name" value="Nuclear import of Rev protein"/>
</dbReference>
<dbReference type="Reactome" id="R-HSA-180910">
    <property type="pathway name" value="Vpr-mediated nuclear import of PICs"/>
</dbReference>
<dbReference type="Reactome" id="R-HSA-191859">
    <property type="pathway name" value="snRNP Assembly"/>
</dbReference>
<dbReference type="Reactome" id="R-HSA-3108214">
    <property type="pathway name" value="SUMOylation of DNA damage response and repair proteins"/>
</dbReference>
<dbReference type="Reactome" id="R-HSA-3232142">
    <property type="pathway name" value="SUMOylation of ubiquitinylation proteins"/>
</dbReference>
<dbReference type="Reactome" id="R-HSA-3301854">
    <property type="pathway name" value="Nuclear Pore Complex (NPC) Disassembly"/>
</dbReference>
<dbReference type="Reactome" id="R-HSA-3371453">
    <property type="pathway name" value="Regulation of HSF1-mediated heat shock response"/>
</dbReference>
<dbReference type="Reactome" id="R-HSA-4085377">
    <property type="pathway name" value="SUMOylation of SUMOylation proteins"/>
</dbReference>
<dbReference type="Reactome" id="R-HSA-4551638">
    <property type="pathway name" value="SUMOylation of chromatin organization proteins"/>
</dbReference>
<dbReference type="Reactome" id="R-HSA-4570464">
    <property type="pathway name" value="SUMOylation of RNA binding proteins"/>
</dbReference>
<dbReference type="Reactome" id="R-HSA-4615885">
    <property type="pathway name" value="SUMOylation of DNA replication proteins"/>
</dbReference>
<dbReference type="Reactome" id="R-HSA-5578749">
    <property type="pathway name" value="Transcriptional regulation by small RNAs"/>
</dbReference>
<dbReference type="Reactome" id="R-HSA-5619107">
    <property type="pathway name" value="Defective TPR may confer susceptibility towards thyroid papillary carcinoma (TPC)"/>
</dbReference>
<dbReference type="Reactome" id="R-HSA-6784531">
    <property type="pathway name" value="tRNA processing in the nucleus"/>
</dbReference>
<dbReference type="Reactome" id="R-HSA-9609690">
    <property type="pathway name" value="HCMV Early Events"/>
</dbReference>
<dbReference type="Reactome" id="R-HSA-9610379">
    <property type="pathway name" value="HCMV Late Events"/>
</dbReference>
<dbReference type="Reactome" id="R-HSA-9615933">
    <property type="pathway name" value="Postmitotic nuclear pore complex (NPC) reformation"/>
</dbReference>
<dbReference type="Reactome" id="R-HSA-9705671">
    <property type="pathway name" value="SARS-CoV-2 activates/modulates innate and adaptive immune responses"/>
</dbReference>
<dbReference type="SignaLink" id="Q8NFH5"/>
<dbReference type="SIGNOR" id="Q8NFH5"/>
<dbReference type="BioGRID-ORCS" id="129401">
    <property type="hits" value="364 hits in 1165 CRISPR screens"/>
</dbReference>
<dbReference type="ChiTaRS" id="NUP35">
    <property type="organism name" value="human"/>
</dbReference>
<dbReference type="EvolutionaryTrace" id="Q8NFH5"/>
<dbReference type="GeneWiki" id="NUP35"/>
<dbReference type="GenomeRNAi" id="129401"/>
<dbReference type="Pharos" id="Q8NFH5">
    <property type="development level" value="Tbio"/>
</dbReference>
<dbReference type="PRO" id="PR:Q8NFH5"/>
<dbReference type="Proteomes" id="UP000005640">
    <property type="component" value="Chromosome 2"/>
</dbReference>
<dbReference type="RNAct" id="Q8NFH5">
    <property type="molecule type" value="protein"/>
</dbReference>
<dbReference type="Bgee" id="ENSG00000163002">
    <property type="expression patterns" value="Expressed in oocyte and 183 other cell types or tissues"/>
</dbReference>
<dbReference type="ExpressionAtlas" id="Q8NFH5">
    <property type="expression patterns" value="baseline and differential"/>
</dbReference>
<dbReference type="GO" id="GO:0005829">
    <property type="term" value="C:cytosol"/>
    <property type="evidence" value="ECO:0000304"/>
    <property type="project" value="Reactome"/>
</dbReference>
<dbReference type="GO" id="GO:0043231">
    <property type="term" value="C:intracellular membrane-bounded organelle"/>
    <property type="evidence" value="ECO:0000314"/>
    <property type="project" value="HPA"/>
</dbReference>
<dbReference type="GO" id="GO:0005635">
    <property type="term" value="C:nuclear envelope"/>
    <property type="evidence" value="ECO:0000314"/>
    <property type="project" value="ComplexPortal"/>
</dbReference>
<dbReference type="GO" id="GO:0031965">
    <property type="term" value="C:nuclear membrane"/>
    <property type="evidence" value="ECO:0000314"/>
    <property type="project" value="HPA"/>
</dbReference>
<dbReference type="GO" id="GO:0005643">
    <property type="term" value="C:nuclear pore"/>
    <property type="evidence" value="ECO:0000303"/>
    <property type="project" value="ComplexPortal"/>
</dbReference>
<dbReference type="GO" id="GO:0044613">
    <property type="term" value="C:nuclear pore central transport channel"/>
    <property type="evidence" value="ECO:0000318"/>
    <property type="project" value="GO_Central"/>
</dbReference>
<dbReference type="GO" id="GO:0044615">
    <property type="term" value="C:nuclear pore nuclear basket"/>
    <property type="evidence" value="ECO:0000318"/>
    <property type="project" value="GO_Central"/>
</dbReference>
<dbReference type="GO" id="GO:0005654">
    <property type="term" value="C:nucleoplasm"/>
    <property type="evidence" value="ECO:0000314"/>
    <property type="project" value="HPA"/>
</dbReference>
<dbReference type="GO" id="GO:0005886">
    <property type="term" value="C:plasma membrane"/>
    <property type="evidence" value="ECO:0000314"/>
    <property type="project" value="HPA"/>
</dbReference>
<dbReference type="GO" id="GO:0042802">
    <property type="term" value="F:identical protein binding"/>
    <property type="evidence" value="ECO:0007669"/>
    <property type="project" value="Ensembl"/>
</dbReference>
<dbReference type="GO" id="GO:0003676">
    <property type="term" value="F:nucleic acid binding"/>
    <property type="evidence" value="ECO:0007669"/>
    <property type="project" value="InterPro"/>
</dbReference>
<dbReference type="GO" id="GO:0005543">
    <property type="term" value="F:phospholipid binding"/>
    <property type="evidence" value="ECO:0000318"/>
    <property type="project" value="GO_Central"/>
</dbReference>
<dbReference type="GO" id="GO:0017056">
    <property type="term" value="F:structural constituent of nuclear pore"/>
    <property type="evidence" value="ECO:0000318"/>
    <property type="project" value="GO_Central"/>
</dbReference>
<dbReference type="GO" id="GO:1990830">
    <property type="term" value="P:cellular response to leukemia inhibitory factor"/>
    <property type="evidence" value="ECO:0007669"/>
    <property type="project" value="Ensembl"/>
</dbReference>
<dbReference type="GO" id="GO:0051028">
    <property type="term" value="P:mRNA transport"/>
    <property type="evidence" value="ECO:0007669"/>
    <property type="project" value="UniProtKB-KW"/>
</dbReference>
<dbReference type="GO" id="GO:0006607">
    <property type="term" value="P:NLS-bearing protein import into nucleus"/>
    <property type="evidence" value="ECO:0000318"/>
    <property type="project" value="GO_Central"/>
</dbReference>
<dbReference type="GO" id="GO:0006999">
    <property type="term" value="P:nuclear pore organization"/>
    <property type="evidence" value="ECO:0000318"/>
    <property type="project" value="GO_Central"/>
</dbReference>
<dbReference type="GO" id="GO:0006913">
    <property type="term" value="P:nucleocytoplasmic transport"/>
    <property type="evidence" value="ECO:0000303"/>
    <property type="project" value="ComplexPortal"/>
</dbReference>
<dbReference type="CDD" id="cd12722">
    <property type="entry name" value="RRM_Nup53"/>
    <property type="match status" value="1"/>
</dbReference>
<dbReference type="FunFam" id="3.30.70.330:FF:000095">
    <property type="entry name" value="Putative Nucleoporin NUP53"/>
    <property type="match status" value="1"/>
</dbReference>
<dbReference type="Gene3D" id="3.30.70.330">
    <property type="match status" value="1"/>
</dbReference>
<dbReference type="InterPro" id="IPR017389">
    <property type="entry name" value="Nucleoporin_NUP53"/>
</dbReference>
<dbReference type="InterPro" id="IPR012677">
    <property type="entry name" value="Nucleotide-bd_a/b_plait_sf"/>
</dbReference>
<dbReference type="InterPro" id="IPR035979">
    <property type="entry name" value="RBD_domain_sf"/>
</dbReference>
<dbReference type="InterPro" id="IPR007846">
    <property type="entry name" value="RRM_NUP35_dom"/>
</dbReference>
<dbReference type="PANTHER" id="PTHR21527">
    <property type="entry name" value="NUCLEOPORIN NUP35"/>
    <property type="match status" value="1"/>
</dbReference>
<dbReference type="PANTHER" id="PTHR21527:SF6">
    <property type="entry name" value="NUCLEOPORIN NUP35"/>
    <property type="match status" value="1"/>
</dbReference>
<dbReference type="Pfam" id="PF05172">
    <property type="entry name" value="RRM_Nup35"/>
    <property type="match status" value="1"/>
</dbReference>
<dbReference type="PIRSF" id="PIRSF038119">
    <property type="entry name" value="Nucleoporin_NUP53"/>
    <property type="match status" value="1"/>
</dbReference>
<dbReference type="SUPFAM" id="SSF54928">
    <property type="entry name" value="RNA-binding domain, RBD"/>
    <property type="match status" value="1"/>
</dbReference>
<dbReference type="PROSITE" id="PS51472">
    <property type="entry name" value="RRM_NUP35"/>
    <property type="match status" value="1"/>
</dbReference>
<reference key="1">
    <citation type="journal article" date="2002" name="J. Cell Biol.">
        <title>Proteomic analysis of the mammalian nuclear pore complex.</title>
        <authorList>
            <person name="Cronshaw J.M."/>
            <person name="Krutchinsky A.N."/>
            <person name="Zhang W."/>
            <person name="Chait B.T."/>
            <person name="Matunis M.J."/>
        </authorList>
    </citation>
    <scope>NUCLEOTIDE SEQUENCE [MRNA] (ISOFORM 1)</scope>
    <scope>SUBCELLULAR LOCATION</scope>
</reference>
<reference key="2">
    <citation type="submission" date="2001-08" db="EMBL/GenBank/DDBJ databases">
        <title>Molecular cloning and expression analysis of human mitotic phosphoprotein 44 gene.</title>
        <authorList>
            <person name="Guo J.H."/>
            <person name="Yu L."/>
        </authorList>
    </citation>
    <scope>NUCLEOTIDE SEQUENCE [LARGE SCALE MRNA] (ISOFORM 1)</scope>
</reference>
<reference key="3">
    <citation type="journal article" date="2004" name="Nat. Genet.">
        <title>Complete sequencing and characterization of 21,243 full-length human cDNAs.</title>
        <authorList>
            <person name="Ota T."/>
            <person name="Suzuki Y."/>
            <person name="Nishikawa T."/>
            <person name="Otsuki T."/>
            <person name="Sugiyama T."/>
            <person name="Irie R."/>
            <person name="Wakamatsu A."/>
            <person name="Hayashi K."/>
            <person name="Sato H."/>
            <person name="Nagai K."/>
            <person name="Kimura K."/>
            <person name="Makita H."/>
            <person name="Sekine M."/>
            <person name="Obayashi M."/>
            <person name="Nishi T."/>
            <person name="Shibahara T."/>
            <person name="Tanaka T."/>
            <person name="Ishii S."/>
            <person name="Yamamoto J."/>
            <person name="Saito K."/>
            <person name="Kawai Y."/>
            <person name="Isono Y."/>
            <person name="Nakamura Y."/>
            <person name="Nagahari K."/>
            <person name="Murakami K."/>
            <person name="Yasuda T."/>
            <person name="Iwayanagi T."/>
            <person name="Wagatsuma M."/>
            <person name="Shiratori A."/>
            <person name="Sudo H."/>
            <person name="Hosoiri T."/>
            <person name="Kaku Y."/>
            <person name="Kodaira H."/>
            <person name="Kondo H."/>
            <person name="Sugawara M."/>
            <person name="Takahashi M."/>
            <person name="Kanda K."/>
            <person name="Yokoi T."/>
            <person name="Furuya T."/>
            <person name="Kikkawa E."/>
            <person name="Omura Y."/>
            <person name="Abe K."/>
            <person name="Kamihara K."/>
            <person name="Katsuta N."/>
            <person name="Sato K."/>
            <person name="Tanikawa M."/>
            <person name="Yamazaki M."/>
            <person name="Ninomiya K."/>
            <person name="Ishibashi T."/>
            <person name="Yamashita H."/>
            <person name="Murakawa K."/>
            <person name="Fujimori K."/>
            <person name="Tanai H."/>
            <person name="Kimata M."/>
            <person name="Watanabe M."/>
            <person name="Hiraoka S."/>
            <person name="Chiba Y."/>
            <person name="Ishida S."/>
            <person name="Ono Y."/>
            <person name="Takiguchi S."/>
            <person name="Watanabe S."/>
            <person name="Yosida M."/>
            <person name="Hotuta T."/>
            <person name="Kusano J."/>
            <person name="Kanehori K."/>
            <person name="Takahashi-Fujii A."/>
            <person name="Hara H."/>
            <person name="Tanase T.-O."/>
            <person name="Nomura Y."/>
            <person name="Togiya S."/>
            <person name="Komai F."/>
            <person name="Hara R."/>
            <person name="Takeuchi K."/>
            <person name="Arita M."/>
            <person name="Imose N."/>
            <person name="Musashino K."/>
            <person name="Yuuki H."/>
            <person name="Oshima A."/>
            <person name="Sasaki N."/>
            <person name="Aotsuka S."/>
            <person name="Yoshikawa Y."/>
            <person name="Matsunawa H."/>
            <person name="Ichihara T."/>
            <person name="Shiohata N."/>
            <person name="Sano S."/>
            <person name="Moriya S."/>
            <person name="Momiyama H."/>
            <person name="Satoh N."/>
            <person name="Takami S."/>
            <person name="Terashima Y."/>
            <person name="Suzuki O."/>
            <person name="Nakagawa S."/>
            <person name="Senoh A."/>
            <person name="Mizoguchi H."/>
            <person name="Goto Y."/>
            <person name="Shimizu F."/>
            <person name="Wakebe H."/>
            <person name="Hishigaki H."/>
            <person name="Watanabe T."/>
            <person name="Sugiyama A."/>
            <person name="Takemoto M."/>
            <person name="Kawakami B."/>
            <person name="Yamazaki M."/>
            <person name="Watanabe K."/>
            <person name="Kumagai A."/>
            <person name="Itakura S."/>
            <person name="Fukuzumi Y."/>
            <person name="Fujimori Y."/>
            <person name="Komiyama M."/>
            <person name="Tashiro H."/>
            <person name="Tanigami A."/>
            <person name="Fujiwara T."/>
            <person name="Ono T."/>
            <person name="Yamada K."/>
            <person name="Fujii Y."/>
            <person name="Ozaki K."/>
            <person name="Hirao M."/>
            <person name="Ohmori Y."/>
            <person name="Kawabata A."/>
            <person name="Hikiji T."/>
            <person name="Kobatake N."/>
            <person name="Inagaki H."/>
            <person name="Ikema Y."/>
            <person name="Okamoto S."/>
            <person name="Okitani R."/>
            <person name="Kawakami T."/>
            <person name="Noguchi S."/>
            <person name="Itoh T."/>
            <person name="Shigeta K."/>
            <person name="Senba T."/>
            <person name="Matsumura K."/>
            <person name="Nakajima Y."/>
            <person name="Mizuno T."/>
            <person name="Morinaga M."/>
            <person name="Sasaki M."/>
            <person name="Togashi T."/>
            <person name="Oyama M."/>
            <person name="Hata H."/>
            <person name="Watanabe M."/>
            <person name="Komatsu T."/>
            <person name="Mizushima-Sugano J."/>
            <person name="Satoh T."/>
            <person name="Shirai Y."/>
            <person name="Takahashi Y."/>
            <person name="Nakagawa K."/>
            <person name="Okumura K."/>
            <person name="Nagase T."/>
            <person name="Nomura N."/>
            <person name="Kikuchi H."/>
            <person name="Masuho Y."/>
            <person name="Yamashita R."/>
            <person name="Nakai K."/>
            <person name="Yada T."/>
            <person name="Nakamura Y."/>
            <person name="Ohara O."/>
            <person name="Isogai T."/>
            <person name="Sugano S."/>
        </authorList>
    </citation>
    <scope>NUCLEOTIDE SEQUENCE [LARGE SCALE MRNA] (ISOFORMS 2 AND 3)</scope>
    <source>
        <tissue>Testis</tissue>
    </source>
</reference>
<reference key="4">
    <citation type="journal article" date="2005" name="Nature">
        <title>Generation and annotation of the DNA sequences of human chromosomes 2 and 4.</title>
        <authorList>
            <person name="Hillier L.W."/>
            <person name="Graves T.A."/>
            <person name="Fulton R.S."/>
            <person name="Fulton L.A."/>
            <person name="Pepin K.H."/>
            <person name="Minx P."/>
            <person name="Wagner-McPherson C."/>
            <person name="Layman D."/>
            <person name="Wylie K."/>
            <person name="Sekhon M."/>
            <person name="Becker M.C."/>
            <person name="Fewell G.A."/>
            <person name="Delehaunty K.D."/>
            <person name="Miner T.L."/>
            <person name="Nash W.E."/>
            <person name="Kremitzki C."/>
            <person name="Oddy L."/>
            <person name="Du H."/>
            <person name="Sun H."/>
            <person name="Bradshaw-Cordum H."/>
            <person name="Ali J."/>
            <person name="Carter J."/>
            <person name="Cordes M."/>
            <person name="Harris A."/>
            <person name="Isak A."/>
            <person name="van Brunt A."/>
            <person name="Nguyen C."/>
            <person name="Du F."/>
            <person name="Courtney L."/>
            <person name="Kalicki J."/>
            <person name="Ozersky P."/>
            <person name="Abbott S."/>
            <person name="Armstrong J."/>
            <person name="Belter E.A."/>
            <person name="Caruso L."/>
            <person name="Cedroni M."/>
            <person name="Cotton M."/>
            <person name="Davidson T."/>
            <person name="Desai A."/>
            <person name="Elliott G."/>
            <person name="Erb T."/>
            <person name="Fronick C."/>
            <person name="Gaige T."/>
            <person name="Haakenson W."/>
            <person name="Haglund K."/>
            <person name="Holmes A."/>
            <person name="Harkins R."/>
            <person name="Kim K."/>
            <person name="Kruchowski S.S."/>
            <person name="Strong C.M."/>
            <person name="Grewal N."/>
            <person name="Goyea E."/>
            <person name="Hou S."/>
            <person name="Levy A."/>
            <person name="Martinka S."/>
            <person name="Mead K."/>
            <person name="McLellan M.D."/>
            <person name="Meyer R."/>
            <person name="Randall-Maher J."/>
            <person name="Tomlinson C."/>
            <person name="Dauphin-Kohlberg S."/>
            <person name="Kozlowicz-Reilly A."/>
            <person name="Shah N."/>
            <person name="Swearengen-Shahid S."/>
            <person name="Snider J."/>
            <person name="Strong J.T."/>
            <person name="Thompson J."/>
            <person name="Yoakum M."/>
            <person name="Leonard S."/>
            <person name="Pearman C."/>
            <person name="Trani L."/>
            <person name="Radionenko M."/>
            <person name="Waligorski J.E."/>
            <person name="Wang C."/>
            <person name="Rock S.M."/>
            <person name="Tin-Wollam A.-M."/>
            <person name="Maupin R."/>
            <person name="Latreille P."/>
            <person name="Wendl M.C."/>
            <person name="Yang S.-P."/>
            <person name="Pohl C."/>
            <person name="Wallis J.W."/>
            <person name="Spieth J."/>
            <person name="Bieri T.A."/>
            <person name="Berkowicz N."/>
            <person name="Nelson J.O."/>
            <person name="Osborne J."/>
            <person name="Ding L."/>
            <person name="Meyer R."/>
            <person name="Sabo A."/>
            <person name="Shotland Y."/>
            <person name="Sinha P."/>
            <person name="Wohldmann P.E."/>
            <person name="Cook L.L."/>
            <person name="Hickenbotham M.T."/>
            <person name="Eldred J."/>
            <person name="Williams D."/>
            <person name="Jones T.A."/>
            <person name="She X."/>
            <person name="Ciccarelli F.D."/>
            <person name="Izaurralde E."/>
            <person name="Taylor J."/>
            <person name="Schmutz J."/>
            <person name="Myers R.M."/>
            <person name="Cox D.R."/>
            <person name="Huang X."/>
            <person name="McPherson J.D."/>
            <person name="Mardis E.R."/>
            <person name="Clifton S.W."/>
            <person name="Warren W.C."/>
            <person name="Chinwalla A.T."/>
            <person name="Eddy S.R."/>
            <person name="Marra M.A."/>
            <person name="Ovcharenko I."/>
            <person name="Furey T.S."/>
            <person name="Miller W."/>
            <person name="Eichler E.E."/>
            <person name="Bork P."/>
            <person name="Suyama M."/>
            <person name="Torrents D."/>
            <person name="Waterston R.H."/>
            <person name="Wilson R.K."/>
        </authorList>
    </citation>
    <scope>NUCLEOTIDE SEQUENCE [LARGE SCALE GENOMIC DNA]</scope>
</reference>
<reference key="5">
    <citation type="journal article" date="2004" name="Genome Res.">
        <title>The status, quality, and expansion of the NIH full-length cDNA project: the Mammalian Gene Collection (MGC).</title>
        <authorList>
            <consortium name="The MGC Project Team"/>
        </authorList>
    </citation>
    <scope>NUCLEOTIDE SEQUENCE [LARGE SCALE MRNA] (ISOFORM 1)</scope>
    <source>
        <tissue>Bone marrow</tissue>
        <tissue>Skin</tissue>
    </source>
</reference>
<reference key="6">
    <citation type="journal article" date="2005" name="Mol. Biol. Cell">
        <title>Vertebrate Nup53 interacts with the nuclear lamina and is required for the assembly of a Nup93-containing complex.</title>
        <authorList>
            <person name="Hawryluk-Gara L.A."/>
            <person name="Shibuya E.K."/>
            <person name="Wozniak R.W."/>
        </authorList>
    </citation>
    <scope>FUNCTION</scope>
    <scope>SUBCELLULAR LOCATION</scope>
    <scope>INTERACTION WITH NUP93</scope>
    <scope>IDENTIFICATION IN A COMPLEX WITH LAMIN B; NUP155 AND NUP205</scope>
</reference>
<reference key="7">
    <citation type="journal article" date="2006" name="Cell">
        <title>Global, in vivo, and site-specific phosphorylation dynamics in signaling networks.</title>
        <authorList>
            <person name="Olsen J.V."/>
            <person name="Blagoev B."/>
            <person name="Gnad F."/>
            <person name="Macek B."/>
            <person name="Kumar C."/>
            <person name="Mortensen P."/>
            <person name="Mann M."/>
        </authorList>
    </citation>
    <scope>PHOSPHORYLATION [LARGE SCALE ANALYSIS] AT SER-73</scope>
    <scope>IDENTIFICATION BY MASS SPECTROMETRY [LARGE SCALE ANALYSIS]</scope>
    <source>
        <tissue>Cervix carcinoma</tissue>
    </source>
</reference>
<reference key="8">
    <citation type="journal article" date="2006" name="Mol. Cell">
        <title>The conserved transmembrane nucleoporin NDC1 is required for nuclear pore complex assembly in vertebrate cells.</title>
        <authorList>
            <person name="Mansfeld J."/>
            <person name="Guettinger S."/>
            <person name="Hawryluk-Gara L.A."/>
            <person name="Pante N."/>
            <person name="Mall M."/>
            <person name="Galy V."/>
            <person name="Haselmann U."/>
            <person name="Muehlhaeusser P."/>
            <person name="Wozniak R.W."/>
            <person name="Mattaj I.W."/>
            <person name="Kutay U."/>
            <person name="Antonin W."/>
        </authorList>
    </citation>
    <scope>INTERACTION WITH TMEM48</scope>
</reference>
<reference key="9">
    <citation type="journal article" date="2008" name="J. Proteome Res.">
        <title>Combining protein-based IMAC, peptide-based IMAC, and MudPIT for efficient phosphoproteomic analysis.</title>
        <authorList>
            <person name="Cantin G.T."/>
            <person name="Yi W."/>
            <person name="Lu B."/>
            <person name="Park S.K."/>
            <person name="Xu T."/>
            <person name="Lee J.-D."/>
            <person name="Yates J.R. III"/>
        </authorList>
    </citation>
    <scope>IDENTIFICATION BY MASS SPECTROMETRY [LARGE SCALE ANALYSIS]</scope>
    <source>
        <tissue>Cervix carcinoma</tissue>
    </source>
</reference>
<reference key="10">
    <citation type="journal article" date="2008" name="Proc. Natl. Acad. Sci. U.S.A.">
        <title>A quantitative atlas of mitotic phosphorylation.</title>
        <authorList>
            <person name="Dephoure N."/>
            <person name="Zhou C."/>
            <person name="Villen J."/>
            <person name="Beausoleil S.A."/>
            <person name="Bakalarski C.E."/>
            <person name="Elledge S.J."/>
            <person name="Gygi S.P."/>
        </authorList>
    </citation>
    <scope>PHOSPHORYLATION [LARGE SCALE ANALYSIS] AT SER-99; SER-100; THR-106; THR-129; SER-138; THR-265; THR-273; SER-279; THR-280 AND THR-308</scope>
    <scope>IDENTIFICATION BY MASS SPECTROMETRY [LARGE SCALE ANALYSIS]</scope>
    <source>
        <tissue>Cervix carcinoma</tissue>
    </source>
</reference>
<reference key="11">
    <citation type="journal article" date="2009" name="Anal. Chem.">
        <title>Lys-N and trypsin cover complementary parts of the phosphoproteome in a refined SCX-based approach.</title>
        <authorList>
            <person name="Gauci S."/>
            <person name="Helbig A.O."/>
            <person name="Slijper M."/>
            <person name="Krijgsveld J."/>
            <person name="Heck A.J."/>
            <person name="Mohammed S."/>
        </authorList>
    </citation>
    <scope>IDENTIFICATION BY MASS SPECTROMETRY [LARGE SCALE ANALYSIS]</scope>
</reference>
<reference key="12">
    <citation type="journal article" date="2009" name="Sci. Signal.">
        <title>Quantitative phosphoproteomic analysis of T cell receptor signaling reveals system-wide modulation of protein-protein interactions.</title>
        <authorList>
            <person name="Mayya V."/>
            <person name="Lundgren D.H."/>
            <person name="Hwang S.-I."/>
            <person name="Rezaul K."/>
            <person name="Wu L."/>
            <person name="Eng J.K."/>
            <person name="Rodionov V."/>
            <person name="Han D.K."/>
        </authorList>
    </citation>
    <scope>PHOSPHORYLATION [LARGE SCALE ANALYSIS] AT SER-100</scope>
    <scope>IDENTIFICATION BY MASS SPECTROMETRY [LARGE SCALE ANALYSIS]</scope>
    <source>
        <tissue>Leukemic T-cell</tissue>
    </source>
</reference>
<reference key="13">
    <citation type="journal article" date="2010" name="Sci. Signal.">
        <title>Quantitative phosphoproteomics reveals widespread full phosphorylation site occupancy during mitosis.</title>
        <authorList>
            <person name="Olsen J.V."/>
            <person name="Vermeulen M."/>
            <person name="Santamaria A."/>
            <person name="Kumar C."/>
            <person name="Miller M.L."/>
            <person name="Jensen L.J."/>
            <person name="Gnad F."/>
            <person name="Cox J."/>
            <person name="Jensen T.S."/>
            <person name="Nigg E.A."/>
            <person name="Brunak S."/>
            <person name="Mann M."/>
        </authorList>
    </citation>
    <scope>PHOSPHORYLATION [LARGE SCALE ANALYSIS] AT SER-66; SER-73; SER-100; THR-106; SER-121; THR-273; SER-279 AND THR-280</scope>
    <scope>IDENTIFICATION BY MASS SPECTROMETRY [LARGE SCALE ANALYSIS]</scope>
    <source>
        <tissue>Cervix carcinoma</tissue>
    </source>
</reference>
<reference key="14">
    <citation type="journal article" date="2011" name="BMC Syst. Biol.">
        <title>Initial characterization of the human central proteome.</title>
        <authorList>
            <person name="Burkard T.R."/>
            <person name="Planyavsky M."/>
            <person name="Kaupe I."/>
            <person name="Breitwieser F.P."/>
            <person name="Buerckstuemmer T."/>
            <person name="Bennett K.L."/>
            <person name="Superti-Furga G."/>
            <person name="Colinge J."/>
        </authorList>
    </citation>
    <scope>IDENTIFICATION BY MASS SPECTROMETRY [LARGE SCALE ANALYSIS]</scope>
</reference>
<reference key="15">
    <citation type="journal article" date="2011" name="Sci. Signal.">
        <title>System-wide temporal characterization of the proteome and phosphoproteome of human embryonic stem cell differentiation.</title>
        <authorList>
            <person name="Rigbolt K.T."/>
            <person name="Prokhorova T.A."/>
            <person name="Akimov V."/>
            <person name="Henningsen J."/>
            <person name="Johansen P.T."/>
            <person name="Kratchmarova I."/>
            <person name="Kassem M."/>
            <person name="Mann M."/>
            <person name="Olsen J.V."/>
            <person name="Blagoev B."/>
        </authorList>
    </citation>
    <scope>PHOSPHORYLATION [LARGE SCALE ANALYSIS] AT SER-73</scope>
    <scope>IDENTIFICATION BY MASS SPECTROMETRY [LARGE SCALE ANALYSIS]</scope>
</reference>
<reference key="16">
    <citation type="journal article" date="2013" name="J. Proteome Res.">
        <title>Toward a comprehensive characterization of a human cancer cell phosphoproteome.</title>
        <authorList>
            <person name="Zhou H."/>
            <person name="Di Palma S."/>
            <person name="Preisinger C."/>
            <person name="Peng M."/>
            <person name="Polat A.N."/>
            <person name="Heck A.J."/>
            <person name="Mohammed S."/>
        </authorList>
    </citation>
    <scope>PHOSPHORYLATION [LARGE SCALE ANALYSIS] AT SER-53; SER-55; SER-66; SER-73; SER-100; THR-106; THR-265; THR-273; SER-279; SER-284 AND THR-308</scope>
    <scope>IDENTIFICATION BY MASS SPECTROMETRY [LARGE SCALE ANALYSIS]</scope>
    <source>
        <tissue>Cervix carcinoma</tissue>
        <tissue>Erythroleukemia</tissue>
    </source>
</reference>
<reference key="17">
    <citation type="journal article" date="2014" name="J. Proteomics">
        <title>An enzyme assisted RP-RPLC approach for in-depth analysis of human liver phosphoproteome.</title>
        <authorList>
            <person name="Bian Y."/>
            <person name="Song C."/>
            <person name="Cheng K."/>
            <person name="Dong M."/>
            <person name="Wang F."/>
            <person name="Huang J."/>
            <person name="Sun D."/>
            <person name="Wang L."/>
            <person name="Ye M."/>
            <person name="Zou H."/>
        </authorList>
    </citation>
    <scope>PHOSPHORYLATION [LARGE SCALE ANALYSIS] AT THR-273 AND THR-275</scope>
    <scope>IDENTIFICATION BY MASS SPECTROMETRY [LARGE SCALE ANALYSIS]</scope>
    <source>
        <tissue>Liver</tissue>
    </source>
</reference>
<reference key="18">
    <citation type="journal article" date="2015" name="Proteomics">
        <title>N-terminome analysis of the human mitochondrial proteome.</title>
        <authorList>
            <person name="Vaca Jacome A.S."/>
            <person name="Rabilloud T."/>
            <person name="Schaeffer-Reiss C."/>
            <person name="Rompais M."/>
            <person name="Ayoub D."/>
            <person name="Lane L."/>
            <person name="Bairoch A."/>
            <person name="Van Dorsselaer A."/>
            <person name="Carapito C."/>
        </authorList>
    </citation>
    <scope>IDENTIFICATION BY MASS SPECTROMETRY [LARGE SCALE ANALYSIS]</scope>
</reference>
<protein>
    <recommendedName>
        <fullName evidence="10">Nucleoporin NUP35</fullName>
    </recommendedName>
    <alternativeName>
        <fullName>35 kDa nucleoporin</fullName>
    </alternativeName>
    <alternativeName>
        <fullName>Mitotic phosphoprotein 44</fullName>
        <shortName>MP-44</shortName>
    </alternativeName>
    <alternativeName>
        <fullName>Nuclear pore complex protein Nup53</fullName>
    </alternativeName>
    <alternativeName>
        <fullName evidence="8">Nucleoporin NUP53</fullName>
    </alternativeName>
</protein>
<feature type="chain" id="PRO_0000234294" description="Nucleoporin NUP35">
    <location>
        <begin position="1"/>
        <end position="326"/>
    </location>
</feature>
<feature type="domain" description="RRM Nup35-type" evidence="2">
    <location>
        <begin position="170"/>
        <end position="250"/>
    </location>
</feature>
<feature type="region of interest" description="Disordered" evidence="3">
    <location>
        <begin position="1"/>
        <end position="33"/>
    </location>
</feature>
<feature type="region of interest" description="Disordered" evidence="3">
    <location>
        <begin position="71"/>
        <end position="92"/>
    </location>
</feature>
<feature type="modified residue" description="Phosphoserine" evidence="16">
    <location>
        <position position="53"/>
    </location>
</feature>
<feature type="modified residue" description="Phosphoserine" evidence="16">
    <location>
        <position position="55"/>
    </location>
</feature>
<feature type="modified residue" description="Phosphoserine" evidence="14 16">
    <location>
        <position position="66"/>
    </location>
</feature>
<feature type="modified residue" description="Phosphoserine" evidence="11 14 15 16">
    <location>
        <position position="73"/>
    </location>
</feature>
<feature type="modified residue" description="Phosphoserine" evidence="12">
    <location>
        <position position="99"/>
    </location>
</feature>
<feature type="modified residue" description="Phosphoserine" evidence="12 13 14 16">
    <location>
        <position position="100"/>
    </location>
</feature>
<feature type="modified residue" description="Phosphothreonine" evidence="12 14 16">
    <location>
        <position position="106"/>
    </location>
</feature>
<feature type="modified residue" description="Phosphoserine" evidence="14">
    <location>
        <position position="121"/>
    </location>
</feature>
<feature type="modified residue" description="Phosphothreonine" evidence="12">
    <location>
        <position position="129"/>
    </location>
</feature>
<feature type="modified residue" description="Phosphoserine" evidence="12">
    <location>
        <position position="138"/>
    </location>
</feature>
<feature type="modified residue" description="Phosphoserine" evidence="1">
    <location>
        <position position="252"/>
    </location>
</feature>
<feature type="modified residue" description="Phosphoserine" evidence="1">
    <location>
        <position position="259"/>
    </location>
</feature>
<feature type="modified residue" description="Phosphothreonine" evidence="12 16">
    <location>
        <position position="265"/>
    </location>
</feature>
<feature type="modified residue" description="Phosphothreonine" evidence="12 14 16 17">
    <location>
        <position position="273"/>
    </location>
</feature>
<feature type="modified residue" description="Phosphothreonine" evidence="17">
    <location>
        <position position="275"/>
    </location>
</feature>
<feature type="modified residue" description="Phosphoserine" evidence="12 14 16">
    <location>
        <position position="279"/>
    </location>
</feature>
<feature type="modified residue" description="Phosphothreonine" evidence="12 14">
    <location>
        <position position="280"/>
    </location>
</feature>
<feature type="modified residue" description="Phosphoserine" evidence="16">
    <location>
        <position position="284"/>
    </location>
</feature>
<feature type="modified residue" description="Phosphothreonine" evidence="12 16">
    <location>
        <position position="308"/>
    </location>
</feature>
<feature type="splice variant" id="VSP_056210" description="In isoform 3." evidence="7">
    <location>
        <begin position="1"/>
        <end position="135"/>
    </location>
</feature>
<feature type="splice variant" id="VSP_056211" description="In isoform 2." evidence="7">
    <location>
        <begin position="1"/>
        <end position="17"/>
    </location>
</feature>
<feature type="sequence conflict" description="In Ref. 2; AAL86379." evidence="9" ref="2">
    <original>E</original>
    <variation>G</variation>
    <location>
        <position position="313"/>
    </location>
</feature>
<feature type="sequence conflict" description="In Ref. 2; AAL86379." evidence="9" ref="2">
    <original>K</original>
    <variation>Q</variation>
    <location>
        <position position="318"/>
    </location>
</feature>
<feature type="helix" evidence="18">
    <location>
        <begin position="172"/>
        <end position="174"/>
    </location>
</feature>
<feature type="strand" evidence="19">
    <location>
        <begin position="175"/>
        <end position="179"/>
    </location>
</feature>
<feature type="helix" evidence="19">
    <location>
        <begin position="183"/>
        <end position="185"/>
    </location>
</feature>
<feature type="helix" evidence="19">
    <location>
        <begin position="186"/>
        <end position="194"/>
    </location>
</feature>
<feature type="strand" evidence="19">
    <location>
        <begin position="201"/>
        <end position="204"/>
    </location>
</feature>
<feature type="strand" evidence="19">
    <location>
        <begin position="206"/>
        <end position="214"/>
    </location>
</feature>
<feature type="helix" evidence="19">
    <location>
        <begin position="218"/>
        <end position="225"/>
    </location>
</feature>
<feature type="turn" evidence="19">
    <location>
        <begin position="226"/>
        <end position="229"/>
    </location>
</feature>
<feature type="strand" evidence="19">
    <location>
        <begin position="230"/>
        <end position="232"/>
    </location>
</feature>
<feature type="turn" evidence="19">
    <location>
        <begin position="233"/>
        <end position="235"/>
    </location>
</feature>
<feature type="strand" evidence="19">
    <location>
        <begin position="236"/>
        <end position="242"/>
    </location>
</feature>
<feature type="helix" evidence="18">
    <location>
        <begin position="246"/>
        <end position="249"/>
    </location>
</feature>